<reference key="1">
    <citation type="journal article" date="2005" name="Proc. Natl. Acad. Sci. U.S.A.">
        <title>Complete genome sequence of Vibrio fischeri: a symbiotic bacterium with pathogenic congeners.</title>
        <authorList>
            <person name="Ruby E.G."/>
            <person name="Urbanowski M."/>
            <person name="Campbell J."/>
            <person name="Dunn A."/>
            <person name="Faini M."/>
            <person name="Gunsalus R."/>
            <person name="Lostroh P."/>
            <person name="Lupp C."/>
            <person name="McCann J."/>
            <person name="Millikan D."/>
            <person name="Schaefer A."/>
            <person name="Stabb E."/>
            <person name="Stevens A."/>
            <person name="Visick K."/>
            <person name="Whistler C."/>
            <person name="Greenberg E.P."/>
        </authorList>
    </citation>
    <scope>NUCLEOTIDE SEQUENCE [LARGE SCALE GENOMIC DNA]</scope>
    <source>
        <strain>ATCC 700601 / ES114</strain>
    </source>
</reference>
<feature type="chain" id="PRO_1000049195" description="Homoserine kinase">
    <location>
        <begin position="1"/>
        <end position="318"/>
    </location>
</feature>
<feature type="binding site" evidence="1">
    <location>
        <begin position="97"/>
        <end position="107"/>
    </location>
    <ligand>
        <name>ATP</name>
        <dbReference type="ChEBI" id="CHEBI:30616"/>
    </ligand>
</feature>
<dbReference type="EC" id="2.7.1.39" evidence="1"/>
<dbReference type="EMBL" id="CP000020">
    <property type="protein sequence ID" value="AAW86612.1"/>
    <property type="molecule type" value="Genomic_DNA"/>
</dbReference>
<dbReference type="RefSeq" id="WP_005420768.1">
    <property type="nucleotide sequence ID" value="NC_006840.2"/>
</dbReference>
<dbReference type="RefSeq" id="YP_205500.1">
    <property type="nucleotide sequence ID" value="NC_006840.2"/>
</dbReference>
<dbReference type="SMR" id="Q5E2Y4"/>
<dbReference type="STRING" id="312309.VF_2117"/>
<dbReference type="EnsemblBacteria" id="AAW86612">
    <property type="protein sequence ID" value="AAW86612"/>
    <property type="gene ID" value="VF_2117"/>
</dbReference>
<dbReference type="GeneID" id="54164823"/>
<dbReference type="KEGG" id="vfi:VF_2117"/>
<dbReference type="PATRIC" id="fig|312309.11.peg.2160"/>
<dbReference type="eggNOG" id="COG0083">
    <property type="taxonomic scope" value="Bacteria"/>
</dbReference>
<dbReference type="HOGENOM" id="CLU_041243_1_1_6"/>
<dbReference type="OrthoDB" id="9769912at2"/>
<dbReference type="UniPathway" id="UPA00050">
    <property type="reaction ID" value="UER00064"/>
</dbReference>
<dbReference type="Proteomes" id="UP000000537">
    <property type="component" value="Chromosome I"/>
</dbReference>
<dbReference type="GO" id="GO:0005737">
    <property type="term" value="C:cytoplasm"/>
    <property type="evidence" value="ECO:0007669"/>
    <property type="project" value="UniProtKB-SubCell"/>
</dbReference>
<dbReference type="GO" id="GO:0005524">
    <property type="term" value="F:ATP binding"/>
    <property type="evidence" value="ECO:0007669"/>
    <property type="project" value="UniProtKB-UniRule"/>
</dbReference>
<dbReference type="GO" id="GO:0004413">
    <property type="term" value="F:homoserine kinase activity"/>
    <property type="evidence" value="ECO:0007669"/>
    <property type="project" value="UniProtKB-UniRule"/>
</dbReference>
<dbReference type="GO" id="GO:0009088">
    <property type="term" value="P:threonine biosynthetic process"/>
    <property type="evidence" value="ECO:0007669"/>
    <property type="project" value="UniProtKB-UniRule"/>
</dbReference>
<dbReference type="Gene3D" id="3.30.230.10">
    <property type="match status" value="1"/>
</dbReference>
<dbReference type="Gene3D" id="3.30.70.890">
    <property type="entry name" value="GHMP kinase, C-terminal domain"/>
    <property type="match status" value="1"/>
</dbReference>
<dbReference type="HAMAP" id="MF_00384">
    <property type="entry name" value="Homoser_kinase"/>
    <property type="match status" value="1"/>
</dbReference>
<dbReference type="InterPro" id="IPR013750">
    <property type="entry name" value="GHMP_kinase_C_dom"/>
</dbReference>
<dbReference type="InterPro" id="IPR036554">
    <property type="entry name" value="GHMP_kinase_C_sf"/>
</dbReference>
<dbReference type="InterPro" id="IPR006204">
    <property type="entry name" value="GHMP_kinase_N_dom"/>
</dbReference>
<dbReference type="InterPro" id="IPR006203">
    <property type="entry name" value="GHMP_knse_ATP-bd_CS"/>
</dbReference>
<dbReference type="InterPro" id="IPR000870">
    <property type="entry name" value="Homoserine_kinase"/>
</dbReference>
<dbReference type="InterPro" id="IPR020568">
    <property type="entry name" value="Ribosomal_Su5_D2-typ_SF"/>
</dbReference>
<dbReference type="InterPro" id="IPR014721">
    <property type="entry name" value="Ribsml_uS5_D2-typ_fold_subgr"/>
</dbReference>
<dbReference type="NCBIfam" id="NF002288">
    <property type="entry name" value="PRK01212.1-4"/>
    <property type="match status" value="1"/>
</dbReference>
<dbReference type="NCBIfam" id="TIGR00191">
    <property type="entry name" value="thrB"/>
    <property type="match status" value="1"/>
</dbReference>
<dbReference type="PANTHER" id="PTHR20861:SF1">
    <property type="entry name" value="HOMOSERINE KINASE"/>
    <property type="match status" value="1"/>
</dbReference>
<dbReference type="PANTHER" id="PTHR20861">
    <property type="entry name" value="HOMOSERINE/4-DIPHOSPHOCYTIDYL-2-C-METHYL-D-ERYTHRITOL KINASE"/>
    <property type="match status" value="1"/>
</dbReference>
<dbReference type="Pfam" id="PF08544">
    <property type="entry name" value="GHMP_kinases_C"/>
    <property type="match status" value="1"/>
</dbReference>
<dbReference type="Pfam" id="PF00288">
    <property type="entry name" value="GHMP_kinases_N"/>
    <property type="match status" value="1"/>
</dbReference>
<dbReference type="PIRSF" id="PIRSF000676">
    <property type="entry name" value="Homoser_kin"/>
    <property type="match status" value="1"/>
</dbReference>
<dbReference type="PRINTS" id="PR00958">
    <property type="entry name" value="HOMSERKINASE"/>
</dbReference>
<dbReference type="SUPFAM" id="SSF55060">
    <property type="entry name" value="GHMP Kinase, C-terminal domain"/>
    <property type="match status" value="1"/>
</dbReference>
<dbReference type="SUPFAM" id="SSF54211">
    <property type="entry name" value="Ribosomal protein S5 domain 2-like"/>
    <property type="match status" value="1"/>
</dbReference>
<dbReference type="PROSITE" id="PS00627">
    <property type="entry name" value="GHMP_KINASES_ATP"/>
    <property type="match status" value="1"/>
</dbReference>
<sequence length="318" mass="34580">MSVVVYAPASIGNVSVGFDVLGAAVSPIDGTLLGDRVLVELGSEAFTLATAGSFVDKLPENPKDNIVYDCWCVFSRELNKKNVALKNVHMILEKNMPIGSGLGSSACSIVAALDALNQFHDNPLNDMELLALMGEMEGQISGGIHYDNVAPCYLGGLQLMVEELGIISQEVPCFDEWYWVMAYPGIKVSTAEAREILPSQYRRQDVIAHGRNLAGFIHACYSKQPELAAKMIKDVVAEPYRERLLPNFAKAREYAASAGALTTGISGSGPTLFSICKDKDVADRVSRWLQENYVQNNEGFVHVCRLDKQGSQVTGSKL</sequence>
<gene>
    <name evidence="1" type="primary">thrB</name>
    <name type="ordered locus">VF_2117</name>
</gene>
<evidence type="ECO:0000255" key="1">
    <source>
        <dbReference type="HAMAP-Rule" id="MF_00384"/>
    </source>
</evidence>
<protein>
    <recommendedName>
        <fullName evidence="1">Homoserine kinase</fullName>
        <shortName evidence="1">HK</shortName>
        <shortName evidence="1">HSK</shortName>
        <ecNumber evidence="1">2.7.1.39</ecNumber>
    </recommendedName>
</protein>
<name>KHSE_ALIF1</name>
<accession>Q5E2Y4</accession>
<proteinExistence type="inferred from homology"/>
<organism>
    <name type="scientific">Aliivibrio fischeri (strain ATCC 700601 / ES114)</name>
    <name type="common">Vibrio fischeri</name>
    <dbReference type="NCBI Taxonomy" id="312309"/>
    <lineage>
        <taxon>Bacteria</taxon>
        <taxon>Pseudomonadati</taxon>
        <taxon>Pseudomonadota</taxon>
        <taxon>Gammaproteobacteria</taxon>
        <taxon>Vibrionales</taxon>
        <taxon>Vibrionaceae</taxon>
        <taxon>Aliivibrio</taxon>
    </lineage>
</organism>
<comment type="function">
    <text evidence="1">Catalyzes the ATP-dependent phosphorylation of L-homoserine to L-homoserine phosphate.</text>
</comment>
<comment type="catalytic activity">
    <reaction evidence="1">
        <text>L-homoserine + ATP = O-phospho-L-homoserine + ADP + H(+)</text>
        <dbReference type="Rhea" id="RHEA:13985"/>
        <dbReference type="ChEBI" id="CHEBI:15378"/>
        <dbReference type="ChEBI" id="CHEBI:30616"/>
        <dbReference type="ChEBI" id="CHEBI:57476"/>
        <dbReference type="ChEBI" id="CHEBI:57590"/>
        <dbReference type="ChEBI" id="CHEBI:456216"/>
        <dbReference type="EC" id="2.7.1.39"/>
    </reaction>
</comment>
<comment type="pathway">
    <text evidence="1">Amino-acid biosynthesis; L-threonine biosynthesis; L-threonine from L-aspartate: step 4/5.</text>
</comment>
<comment type="subcellular location">
    <subcellularLocation>
        <location evidence="1">Cytoplasm</location>
    </subcellularLocation>
</comment>
<comment type="similarity">
    <text evidence="1">Belongs to the GHMP kinase family. Homoserine kinase subfamily.</text>
</comment>
<keyword id="KW-0028">Amino-acid biosynthesis</keyword>
<keyword id="KW-0067">ATP-binding</keyword>
<keyword id="KW-0963">Cytoplasm</keyword>
<keyword id="KW-0418">Kinase</keyword>
<keyword id="KW-0547">Nucleotide-binding</keyword>
<keyword id="KW-1185">Reference proteome</keyword>
<keyword id="KW-0791">Threonine biosynthesis</keyword>
<keyword id="KW-0808">Transferase</keyword>